<evidence type="ECO:0000255" key="1">
    <source>
        <dbReference type="HAMAP-Rule" id="MF_00127"/>
    </source>
</evidence>
<organism>
    <name type="scientific">Colwellia psychrerythraea (strain 34H / ATCC BAA-681)</name>
    <name type="common">Vibrio psychroerythus</name>
    <dbReference type="NCBI Taxonomy" id="167879"/>
    <lineage>
        <taxon>Bacteria</taxon>
        <taxon>Pseudomonadati</taxon>
        <taxon>Pseudomonadota</taxon>
        <taxon>Gammaproteobacteria</taxon>
        <taxon>Alteromonadales</taxon>
        <taxon>Colwelliaceae</taxon>
        <taxon>Colwellia</taxon>
    </lineage>
</organism>
<accession>Q47WC1</accession>
<sequence length="426" mass="48204">MAKQKALQAIRGMNDCLPSETNIWQMVETVLRRVASNYGFAEIRMPIVESTALFKRGIGEVTDIVEKEMYTFDDLNGDSLTLRPEGTASCVRAGNQHGLLYNQEQRLWYMGPMFRHERPQKGRYRQFHQFGLEAFGIATPDIDAEIILLTSRLWRELGINEFVTLELNSLGSNEERANYREALIAYLLEHEELLDEDSKRRMHTNPLRVLDSKNPQVQEALTNAPKLSDHFGEETQTHFDTLCARLDAAGINYVLNERLVRGLDYYNRTVFEWVTTTLGAQGTICAGGRYDGLVEQLGGKATPAFGFALGIERLVLMLTELEKVTNIRPQVDAYVVILGDDAQVAANKLAEQWRDQVPEIRLQCHCGGGNMKKQLKRADKSGAQIALILGDDEITQEKVMVKYLRGQKEQESIEFTQVSSLLSELI</sequence>
<reference key="1">
    <citation type="journal article" date="2005" name="Proc. Natl. Acad. Sci. U.S.A.">
        <title>The psychrophilic lifestyle as revealed by the genome sequence of Colwellia psychrerythraea 34H through genomic and proteomic analyses.</title>
        <authorList>
            <person name="Methe B.A."/>
            <person name="Nelson K.E."/>
            <person name="Deming J.W."/>
            <person name="Momen B."/>
            <person name="Melamud E."/>
            <person name="Zhang X."/>
            <person name="Moult J."/>
            <person name="Madupu R."/>
            <person name="Nelson W.C."/>
            <person name="Dodson R.J."/>
            <person name="Brinkac L.M."/>
            <person name="Daugherty S.C."/>
            <person name="Durkin A.S."/>
            <person name="DeBoy R.T."/>
            <person name="Kolonay J.F."/>
            <person name="Sullivan S.A."/>
            <person name="Zhou L."/>
            <person name="Davidsen T.M."/>
            <person name="Wu M."/>
            <person name="Huston A.L."/>
            <person name="Lewis M."/>
            <person name="Weaver B."/>
            <person name="Weidman J.F."/>
            <person name="Khouri H."/>
            <person name="Utterback T.R."/>
            <person name="Feldblyum T.V."/>
            <person name="Fraser C.M."/>
        </authorList>
    </citation>
    <scope>NUCLEOTIDE SEQUENCE [LARGE SCALE GENOMIC DNA]</scope>
    <source>
        <strain>34H / ATCC BAA-681</strain>
    </source>
</reference>
<gene>
    <name evidence="1" type="primary">hisS</name>
    <name type="ordered locus">CPS_4251</name>
</gene>
<dbReference type="EC" id="6.1.1.21" evidence="1"/>
<dbReference type="EMBL" id="CP000083">
    <property type="protein sequence ID" value="AAZ27900.1"/>
    <property type="molecule type" value="Genomic_DNA"/>
</dbReference>
<dbReference type="SMR" id="Q47WC1"/>
<dbReference type="STRING" id="167879.CPS_4251"/>
<dbReference type="KEGG" id="cps:CPS_4251"/>
<dbReference type="eggNOG" id="COG0124">
    <property type="taxonomic scope" value="Bacteria"/>
</dbReference>
<dbReference type="HOGENOM" id="CLU_025113_1_0_6"/>
<dbReference type="Proteomes" id="UP000000547">
    <property type="component" value="Chromosome"/>
</dbReference>
<dbReference type="GO" id="GO:0005737">
    <property type="term" value="C:cytoplasm"/>
    <property type="evidence" value="ECO:0007669"/>
    <property type="project" value="UniProtKB-SubCell"/>
</dbReference>
<dbReference type="GO" id="GO:0005524">
    <property type="term" value="F:ATP binding"/>
    <property type="evidence" value="ECO:0007669"/>
    <property type="project" value="UniProtKB-UniRule"/>
</dbReference>
<dbReference type="GO" id="GO:0004821">
    <property type="term" value="F:histidine-tRNA ligase activity"/>
    <property type="evidence" value="ECO:0007669"/>
    <property type="project" value="UniProtKB-UniRule"/>
</dbReference>
<dbReference type="GO" id="GO:0006427">
    <property type="term" value="P:histidyl-tRNA aminoacylation"/>
    <property type="evidence" value="ECO:0007669"/>
    <property type="project" value="UniProtKB-UniRule"/>
</dbReference>
<dbReference type="CDD" id="cd00773">
    <property type="entry name" value="HisRS-like_core"/>
    <property type="match status" value="1"/>
</dbReference>
<dbReference type="CDD" id="cd00859">
    <property type="entry name" value="HisRS_anticodon"/>
    <property type="match status" value="1"/>
</dbReference>
<dbReference type="FunFam" id="3.30.930.10:FF:000005">
    <property type="entry name" value="Histidine--tRNA ligase"/>
    <property type="match status" value="1"/>
</dbReference>
<dbReference type="Gene3D" id="3.40.50.800">
    <property type="entry name" value="Anticodon-binding domain"/>
    <property type="match status" value="1"/>
</dbReference>
<dbReference type="Gene3D" id="3.30.930.10">
    <property type="entry name" value="Bira Bifunctional Protein, Domain 2"/>
    <property type="match status" value="1"/>
</dbReference>
<dbReference type="HAMAP" id="MF_00127">
    <property type="entry name" value="His_tRNA_synth"/>
    <property type="match status" value="1"/>
</dbReference>
<dbReference type="InterPro" id="IPR006195">
    <property type="entry name" value="aa-tRNA-synth_II"/>
</dbReference>
<dbReference type="InterPro" id="IPR045864">
    <property type="entry name" value="aa-tRNA-synth_II/BPL/LPL"/>
</dbReference>
<dbReference type="InterPro" id="IPR004154">
    <property type="entry name" value="Anticodon-bd"/>
</dbReference>
<dbReference type="InterPro" id="IPR036621">
    <property type="entry name" value="Anticodon-bd_dom_sf"/>
</dbReference>
<dbReference type="InterPro" id="IPR015807">
    <property type="entry name" value="His-tRNA-ligase"/>
</dbReference>
<dbReference type="InterPro" id="IPR041715">
    <property type="entry name" value="HisRS-like_core"/>
</dbReference>
<dbReference type="InterPro" id="IPR004516">
    <property type="entry name" value="HisRS/HisZ"/>
</dbReference>
<dbReference type="InterPro" id="IPR033656">
    <property type="entry name" value="HisRS_anticodon"/>
</dbReference>
<dbReference type="NCBIfam" id="TIGR00442">
    <property type="entry name" value="hisS"/>
    <property type="match status" value="1"/>
</dbReference>
<dbReference type="PANTHER" id="PTHR43707:SF1">
    <property type="entry name" value="HISTIDINE--TRNA LIGASE, MITOCHONDRIAL-RELATED"/>
    <property type="match status" value="1"/>
</dbReference>
<dbReference type="PANTHER" id="PTHR43707">
    <property type="entry name" value="HISTIDYL-TRNA SYNTHETASE"/>
    <property type="match status" value="1"/>
</dbReference>
<dbReference type="Pfam" id="PF03129">
    <property type="entry name" value="HGTP_anticodon"/>
    <property type="match status" value="1"/>
</dbReference>
<dbReference type="Pfam" id="PF13393">
    <property type="entry name" value="tRNA-synt_His"/>
    <property type="match status" value="1"/>
</dbReference>
<dbReference type="PIRSF" id="PIRSF001549">
    <property type="entry name" value="His-tRNA_synth"/>
    <property type="match status" value="1"/>
</dbReference>
<dbReference type="SUPFAM" id="SSF52954">
    <property type="entry name" value="Class II aaRS ABD-related"/>
    <property type="match status" value="1"/>
</dbReference>
<dbReference type="SUPFAM" id="SSF55681">
    <property type="entry name" value="Class II aaRS and biotin synthetases"/>
    <property type="match status" value="1"/>
</dbReference>
<dbReference type="PROSITE" id="PS50862">
    <property type="entry name" value="AA_TRNA_LIGASE_II"/>
    <property type="match status" value="1"/>
</dbReference>
<name>SYH_COLP3</name>
<feature type="chain" id="PRO_0000136144" description="Histidine--tRNA ligase">
    <location>
        <begin position="1"/>
        <end position="426"/>
    </location>
</feature>
<keyword id="KW-0030">Aminoacyl-tRNA synthetase</keyword>
<keyword id="KW-0067">ATP-binding</keyword>
<keyword id="KW-0963">Cytoplasm</keyword>
<keyword id="KW-0436">Ligase</keyword>
<keyword id="KW-0547">Nucleotide-binding</keyword>
<keyword id="KW-0648">Protein biosynthesis</keyword>
<proteinExistence type="inferred from homology"/>
<comment type="catalytic activity">
    <reaction evidence="1">
        <text>tRNA(His) + L-histidine + ATP = L-histidyl-tRNA(His) + AMP + diphosphate + H(+)</text>
        <dbReference type="Rhea" id="RHEA:17313"/>
        <dbReference type="Rhea" id="RHEA-COMP:9665"/>
        <dbReference type="Rhea" id="RHEA-COMP:9689"/>
        <dbReference type="ChEBI" id="CHEBI:15378"/>
        <dbReference type="ChEBI" id="CHEBI:30616"/>
        <dbReference type="ChEBI" id="CHEBI:33019"/>
        <dbReference type="ChEBI" id="CHEBI:57595"/>
        <dbReference type="ChEBI" id="CHEBI:78442"/>
        <dbReference type="ChEBI" id="CHEBI:78527"/>
        <dbReference type="ChEBI" id="CHEBI:456215"/>
        <dbReference type="EC" id="6.1.1.21"/>
    </reaction>
</comment>
<comment type="subunit">
    <text evidence="1">Homodimer.</text>
</comment>
<comment type="subcellular location">
    <subcellularLocation>
        <location evidence="1">Cytoplasm</location>
    </subcellularLocation>
</comment>
<comment type="similarity">
    <text evidence="1">Belongs to the class-II aminoacyl-tRNA synthetase family.</text>
</comment>
<protein>
    <recommendedName>
        <fullName evidence="1">Histidine--tRNA ligase</fullName>
        <ecNumber evidence="1">6.1.1.21</ecNumber>
    </recommendedName>
    <alternativeName>
        <fullName evidence="1">Histidyl-tRNA synthetase</fullName>
        <shortName evidence="1">HisRS</shortName>
    </alternativeName>
</protein>